<reference key="1">
    <citation type="journal article" date="2005" name="J. Bacteriol.">
        <title>Swine and poultry pathogens: the complete genome sequences of two strains of Mycoplasma hyopneumoniae and a strain of Mycoplasma synoviae.</title>
        <authorList>
            <person name="Vasconcelos A.T.R."/>
            <person name="Ferreira H.B."/>
            <person name="Bizarro C.V."/>
            <person name="Bonatto S.L."/>
            <person name="Carvalho M.O."/>
            <person name="Pinto P.M."/>
            <person name="Almeida D.F."/>
            <person name="Almeida L.G.P."/>
            <person name="Almeida R."/>
            <person name="Alves-Junior L."/>
            <person name="Assuncao E.N."/>
            <person name="Azevedo V.A.C."/>
            <person name="Bogo M.R."/>
            <person name="Brigido M.M."/>
            <person name="Brocchi M."/>
            <person name="Burity H.A."/>
            <person name="Camargo A.A."/>
            <person name="Camargo S.S."/>
            <person name="Carepo M.S."/>
            <person name="Carraro D.M."/>
            <person name="de Mattos Cascardo J.C."/>
            <person name="Castro L.A."/>
            <person name="Cavalcanti G."/>
            <person name="Chemale G."/>
            <person name="Collevatti R.G."/>
            <person name="Cunha C.W."/>
            <person name="Dallagiovanna B."/>
            <person name="Dambros B.P."/>
            <person name="Dellagostin O.A."/>
            <person name="Falcao C."/>
            <person name="Fantinatti-Garboggini F."/>
            <person name="Felipe M.S.S."/>
            <person name="Fiorentin L."/>
            <person name="Franco G.R."/>
            <person name="Freitas N.S.A."/>
            <person name="Frias D."/>
            <person name="Grangeiro T.B."/>
            <person name="Grisard E.C."/>
            <person name="Guimaraes C.T."/>
            <person name="Hungria M."/>
            <person name="Jardim S.N."/>
            <person name="Krieger M.A."/>
            <person name="Laurino J.P."/>
            <person name="Lima L.F.A."/>
            <person name="Lopes M.I."/>
            <person name="Loreto E.L.S."/>
            <person name="Madeira H.M.F."/>
            <person name="Manfio G.P."/>
            <person name="Maranhao A.Q."/>
            <person name="Martinkovics C.T."/>
            <person name="Medeiros S.R.B."/>
            <person name="Moreira M.A.M."/>
            <person name="Neiva M."/>
            <person name="Ramalho-Neto C.E."/>
            <person name="Nicolas M.F."/>
            <person name="Oliveira S.C."/>
            <person name="Paixao R.F.C."/>
            <person name="Pedrosa F.O."/>
            <person name="Pena S.D.J."/>
            <person name="Pereira M."/>
            <person name="Pereira-Ferrari L."/>
            <person name="Piffer I."/>
            <person name="Pinto L.S."/>
            <person name="Potrich D.P."/>
            <person name="Salim A.C.M."/>
            <person name="Santos F.R."/>
            <person name="Schmitt R."/>
            <person name="Schneider M.P.C."/>
            <person name="Schrank A."/>
            <person name="Schrank I.S."/>
            <person name="Schuck A.F."/>
            <person name="Seuanez H.N."/>
            <person name="Silva D.W."/>
            <person name="Silva R."/>
            <person name="Silva S.C."/>
            <person name="Soares C.M.A."/>
            <person name="Souza K.R.L."/>
            <person name="Souza R.C."/>
            <person name="Staats C.C."/>
            <person name="Steffens M.B.R."/>
            <person name="Teixeira S.M.R."/>
            <person name="Urmenyi T.P."/>
            <person name="Vainstein M.H."/>
            <person name="Zuccherato L.W."/>
            <person name="Simpson A.J.G."/>
            <person name="Zaha A."/>
        </authorList>
    </citation>
    <scope>NUCLEOTIDE SEQUENCE [LARGE SCALE GENOMIC DNA]</scope>
    <source>
        <strain>7448</strain>
    </source>
</reference>
<feature type="chain" id="PRO_1000202865" description="Transcription elongation factor GreA">
    <location>
        <begin position="1"/>
        <end position="160"/>
    </location>
</feature>
<feature type="coiled-coil region" evidence="1">
    <location>
        <begin position="3"/>
        <end position="84"/>
    </location>
</feature>
<dbReference type="EMBL" id="AE017244">
    <property type="protein sequence ID" value="AAZ54030.1"/>
    <property type="molecule type" value="Genomic_DNA"/>
</dbReference>
<dbReference type="RefSeq" id="WP_011290441.1">
    <property type="nucleotide sequence ID" value="NC_007332.1"/>
</dbReference>
<dbReference type="SMR" id="Q4A759"/>
<dbReference type="KEGG" id="mhp:MHP7448_0668"/>
<dbReference type="HOGENOM" id="CLU_101379_2_1_14"/>
<dbReference type="Proteomes" id="UP000000553">
    <property type="component" value="Chromosome"/>
</dbReference>
<dbReference type="GO" id="GO:0003677">
    <property type="term" value="F:DNA binding"/>
    <property type="evidence" value="ECO:0007669"/>
    <property type="project" value="UniProtKB-UniRule"/>
</dbReference>
<dbReference type="GO" id="GO:0070063">
    <property type="term" value="F:RNA polymerase binding"/>
    <property type="evidence" value="ECO:0007669"/>
    <property type="project" value="InterPro"/>
</dbReference>
<dbReference type="GO" id="GO:0006354">
    <property type="term" value="P:DNA-templated transcription elongation"/>
    <property type="evidence" value="ECO:0007669"/>
    <property type="project" value="TreeGrafter"/>
</dbReference>
<dbReference type="GO" id="GO:0032784">
    <property type="term" value="P:regulation of DNA-templated transcription elongation"/>
    <property type="evidence" value="ECO:0007669"/>
    <property type="project" value="UniProtKB-UniRule"/>
</dbReference>
<dbReference type="FunFam" id="1.10.287.180:FF:000001">
    <property type="entry name" value="Transcription elongation factor GreA"/>
    <property type="match status" value="1"/>
</dbReference>
<dbReference type="Gene3D" id="3.10.50.30">
    <property type="entry name" value="Transcription elongation factor, GreA/GreB, C-terminal domain"/>
    <property type="match status" value="1"/>
</dbReference>
<dbReference type="Gene3D" id="1.10.287.180">
    <property type="entry name" value="Transcription elongation factor, GreA/GreB, N-terminal domain"/>
    <property type="match status" value="1"/>
</dbReference>
<dbReference type="HAMAP" id="MF_00105">
    <property type="entry name" value="GreA_GreB"/>
    <property type="match status" value="1"/>
</dbReference>
<dbReference type="InterPro" id="IPR036953">
    <property type="entry name" value="GreA/GreB_C_sf"/>
</dbReference>
<dbReference type="InterPro" id="IPR018151">
    <property type="entry name" value="TF_GreA/GreB_CS"/>
</dbReference>
<dbReference type="InterPro" id="IPR006359">
    <property type="entry name" value="Tscrpt_elong_fac_GreA"/>
</dbReference>
<dbReference type="InterPro" id="IPR028624">
    <property type="entry name" value="Tscrpt_elong_fac_GreA/B"/>
</dbReference>
<dbReference type="InterPro" id="IPR001437">
    <property type="entry name" value="Tscrpt_elong_fac_GreA/B_C"/>
</dbReference>
<dbReference type="InterPro" id="IPR023459">
    <property type="entry name" value="Tscrpt_elong_fac_GreA/B_fam"/>
</dbReference>
<dbReference type="InterPro" id="IPR022691">
    <property type="entry name" value="Tscrpt_elong_fac_GreA/B_N"/>
</dbReference>
<dbReference type="InterPro" id="IPR036805">
    <property type="entry name" value="Tscrpt_elong_fac_GreA/B_N_sf"/>
</dbReference>
<dbReference type="NCBIfam" id="TIGR01462">
    <property type="entry name" value="greA"/>
    <property type="match status" value="1"/>
</dbReference>
<dbReference type="NCBIfam" id="NF001263">
    <property type="entry name" value="PRK00226.1-4"/>
    <property type="match status" value="1"/>
</dbReference>
<dbReference type="PANTHER" id="PTHR30437">
    <property type="entry name" value="TRANSCRIPTION ELONGATION FACTOR GREA"/>
    <property type="match status" value="1"/>
</dbReference>
<dbReference type="PANTHER" id="PTHR30437:SF4">
    <property type="entry name" value="TRANSCRIPTION ELONGATION FACTOR GREA"/>
    <property type="match status" value="1"/>
</dbReference>
<dbReference type="Pfam" id="PF01272">
    <property type="entry name" value="GreA_GreB"/>
    <property type="match status" value="1"/>
</dbReference>
<dbReference type="Pfam" id="PF03449">
    <property type="entry name" value="GreA_GreB_N"/>
    <property type="match status" value="1"/>
</dbReference>
<dbReference type="PIRSF" id="PIRSF006092">
    <property type="entry name" value="GreA_GreB"/>
    <property type="match status" value="1"/>
</dbReference>
<dbReference type="SUPFAM" id="SSF54534">
    <property type="entry name" value="FKBP-like"/>
    <property type="match status" value="1"/>
</dbReference>
<dbReference type="SUPFAM" id="SSF46557">
    <property type="entry name" value="GreA transcript cleavage protein, N-terminal domain"/>
    <property type="match status" value="1"/>
</dbReference>
<dbReference type="PROSITE" id="PS00829">
    <property type="entry name" value="GREAB_1"/>
    <property type="match status" value="1"/>
</dbReference>
<dbReference type="PROSITE" id="PS00830">
    <property type="entry name" value="GREAB_2"/>
    <property type="match status" value="1"/>
</dbReference>
<protein>
    <recommendedName>
        <fullName evidence="1">Transcription elongation factor GreA</fullName>
    </recommendedName>
    <alternativeName>
        <fullName evidence="1">Transcript cleavage factor GreA</fullName>
    </alternativeName>
</protein>
<gene>
    <name evidence="1" type="primary">greA</name>
    <name type="ordered locus">MHP7448_0668</name>
</gene>
<evidence type="ECO:0000255" key="1">
    <source>
        <dbReference type="HAMAP-Rule" id="MF_00105"/>
    </source>
</evidence>
<accession>Q4A759</accession>
<keyword id="KW-0175">Coiled coil</keyword>
<keyword id="KW-0238">DNA-binding</keyword>
<keyword id="KW-0804">Transcription</keyword>
<keyword id="KW-0805">Transcription regulation</keyword>
<sequence>MKSIVNDKILLTQQKLEEIEKELEHLINVERVNVIQEIKDARSQGDLSENAEYDVAREKQGIIESRIRELETIISKAKIIKADLGSSRVSIGSKVSLENVESGEIQTFQIVSSIDADPFKSKISNFSPIAQALLGQHQGDEVEVDVNEKYSVRILEVINE</sequence>
<comment type="function">
    <text evidence="1">Necessary for efficient RNA polymerase transcription elongation past template-encoded arresting sites. The arresting sites in DNA have the property of trapping a certain fraction of elongating RNA polymerases that pass through, resulting in locked ternary complexes. Cleavage of the nascent transcript by cleavage factors such as GreA or GreB allows the resumption of elongation from the new 3'terminus. GreA releases sequences of 2 to 3 nucleotides.</text>
</comment>
<comment type="similarity">
    <text evidence="1">Belongs to the GreA/GreB family.</text>
</comment>
<proteinExistence type="inferred from homology"/>
<organism>
    <name type="scientific">Mesomycoplasma hyopneumoniae (strain 7448)</name>
    <name type="common">Mycoplasma hyopneumoniae</name>
    <dbReference type="NCBI Taxonomy" id="262722"/>
    <lineage>
        <taxon>Bacteria</taxon>
        <taxon>Bacillati</taxon>
        <taxon>Mycoplasmatota</taxon>
        <taxon>Mycoplasmoidales</taxon>
        <taxon>Metamycoplasmataceae</taxon>
        <taxon>Mesomycoplasma</taxon>
    </lineage>
</organism>
<name>GREA_MESH7</name>